<sequence length="360" mass="39290">METITVGLDERSYPIFFNVNELSMLGSLCADQKLGQRVAVVTNPTVGAWYFEPVRESLVSAGFSVHKIEVPDGEEYKNSDTLKDIYDWLIDFGLDRGSFIVALGGGVIGDMAGYAAATYLRGIPFVQVPTTLLAQVDSSVGGKTGINHEKGKNLIGAFYQPRLVMIDVAVLDTLAEREYLSGLAEMAKYGVVLDAEFFRFMYDNVEKLLSRDKECLLAAVKRSCALKASVVEQDEREGGLRAVLNYGHTIGHAVETLTGYRQYLHGEAVAIGMAQAAKISESMGFSSSDDTERVLSLLSKLKLPQDLPPFSPSEYIEAICHDKKVRDGGLNFVFNKNLGSFTIATVADVSQLLRICGIGE</sequence>
<dbReference type="EC" id="4.2.3.4" evidence="1"/>
<dbReference type="EMBL" id="CP000698">
    <property type="protein sequence ID" value="ABQ26010.1"/>
    <property type="molecule type" value="Genomic_DNA"/>
</dbReference>
<dbReference type="RefSeq" id="WP_011938715.1">
    <property type="nucleotide sequence ID" value="NC_009483.1"/>
</dbReference>
<dbReference type="SMR" id="A5GF05"/>
<dbReference type="STRING" id="351605.Gura_1820"/>
<dbReference type="KEGG" id="gur:Gura_1820"/>
<dbReference type="HOGENOM" id="CLU_001201_0_2_7"/>
<dbReference type="OrthoDB" id="9806583at2"/>
<dbReference type="UniPathway" id="UPA00053">
    <property type="reaction ID" value="UER00085"/>
</dbReference>
<dbReference type="Proteomes" id="UP000006695">
    <property type="component" value="Chromosome"/>
</dbReference>
<dbReference type="GO" id="GO:0005737">
    <property type="term" value="C:cytoplasm"/>
    <property type="evidence" value="ECO:0007669"/>
    <property type="project" value="UniProtKB-SubCell"/>
</dbReference>
<dbReference type="GO" id="GO:0003856">
    <property type="term" value="F:3-dehydroquinate synthase activity"/>
    <property type="evidence" value="ECO:0007669"/>
    <property type="project" value="UniProtKB-UniRule"/>
</dbReference>
<dbReference type="GO" id="GO:0046872">
    <property type="term" value="F:metal ion binding"/>
    <property type="evidence" value="ECO:0007669"/>
    <property type="project" value="UniProtKB-KW"/>
</dbReference>
<dbReference type="GO" id="GO:0000166">
    <property type="term" value="F:nucleotide binding"/>
    <property type="evidence" value="ECO:0007669"/>
    <property type="project" value="UniProtKB-KW"/>
</dbReference>
<dbReference type="GO" id="GO:0008652">
    <property type="term" value="P:amino acid biosynthetic process"/>
    <property type="evidence" value="ECO:0007669"/>
    <property type="project" value="UniProtKB-KW"/>
</dbReference>
<dbReference type="GO" id="GO:0009073">
    <property type="term" value="P:aromatic amino acid family biosynthetic process"/>
    <property type="evidence" value="ECO:0007669"/>
    <property type="project" value="UniProtKB-KW"/>
</dbReference>
<dbReference type="GO" id="GO:0009423">
    <property type="term" value="P:chorismate biosynthetic process"/>
    <property type="evidence" value="ECO:0007669"/>
    <property type="project" value="UniProtKB-UniRule"/>
</dbReference>
<dbReference type="CDD" id="cd08195">
    <property type="entry name" value="DHQS"/>
    <property type="match status" value="1"/>
</dbReference>
<dbReference type="FunFam" id="3.40.50.1970:FF:000001">
    <property type="entry name" value="3-dehydroquinate synthase"/>
    <property type="match status" value="1"/>
</dbReference>
<dbReference type="Gene3D" id="3.40.50.1970">
    <property type="match status" value="1"/>
</dbReference>
<dbReference type="Gene3D" id="1.20.1090.10">
    <property type="entry name" value="Dehydroquinate synthase-like - alpha domain"/>
    <property type="match status" value="1"/>
</dbReference>
<dbReference type="HAMAP" id="MF_00110">
    <property type="entry name" value="DHQ_synthase"/>
    <property type="match status" value="1"/>
</dbReference>
<dbReference type="InterPro" id="IPR050071">
    <property type="entry name" value="Dehydroquinate_synthase"/>
</dbReference>
<dbReference type="InterPro" id="IPR016037">
    <property type="entry name" value="DHQ_synth_AroB"/>
</dbReference>
<dbReference type="InterPro" id="IPR030963">
    <property type="entry name" value="DHQ_synth_fam"/>
</dbReference>
<dbReference type="InterPro" id="IPR030960">
    <property type="entry name" value="DHQS/DOIS_N"/>
</dbReference>
<dbReference type="InterPro" id="IPR056179">
    <property type="entry name" value="DHQS_C"/>
</dbReference>
<dbReference type="NCBIfam" id="TIGR01357">
    <property type="entry name" value="aroB"/>
    <property type="match status" value="1"/>
</dbReference>
<dbReference type="PANTHER" id="PTHR43622">
    <property type="entry name" value="3-DEHYDROQUINATE SYNTHASE"/>
    <property type="match status" value="1"/>
</dbReference>
<dbReference type="PANTHER" id="PTHR43622:SF7">
    <property type="entry name" value="3-DEHYDROQUINATE SYNTHASE, CHLOROPLASTIC"/>
    <property type="match status" value="1"/>
</dbReference>
<dbReference type="Pfam" id="PF01761">
    <property type="entry name" value="DHQ_synthase"/>
    <property type="match status" value="1"/>
</dbReference>
<dbReference type="Pfam" id="PF24621">
    <property type="entry name" value="DHQS_C"/>
    <property type="match status" value="1"/>
</dbReference>
<dbReference type="PIRSF" id="PIRSF001455">
    <property type="entry name" value="DHQ_synth"/>
    <property type="match status" value="1"/>
</dbReference>
<dbReference type="SUPFAM" id="SSF56796">
    <property type="entry name" value="Dehydroquinate synthase-like"/>
    <property type="match status" value="1"/>
</dbReference>
<reference key="1">
    <citation type="submission" date="2007-05" db="EMBL/GenBank/DDBJ databases">
        <title>Complete sequence of Geobacter uraniireducens Rf4.</title>
        <authorList>
            <consortium name="US DOE Joint Genome Institute"/>
            <person name="Copeland A."/>
            <person name="Lucas S."/>
            <person name="Lapidus A."/>
            <person name="Barry K."/>
            <person name="Detter J.C."/>
            <person name="Glavina del Rio T."/>
            <person name="Hammon N."/>
            <person name="Israni S."/>
            <person name="Dalin E."/>
            <person name="Tice H."/>
            <person name="Pitluck S."/>
            <person name="Chertkov O."/>
            <person name="Brettin T."/>
            <person name="Bruce D."/>
            <person name="Han C."/>
            <person name="Schmutz J."/>
            <person name="Larimer F."/>
            <person name="Land M."/>
            <person name="Hauser L."/>
            <person name="Kyrpides N."/>
            <person name="Mikhailova N."/>
            <person name="Shelobolina E."/>
            <person name="Aklujkar M."/>
            <person name="Lovley D."/>
            <person name="Richardson P."/>
        </authorList>
    </citation>
    <scope>NUCLEOTIDE SEQUENCE [LARGE SCALE GENOMIC DNA]</scope>
    <source>
        <strain>ATCC BAA-1134 / JCM 13001 / Rf4</strain>
    </source>
</reference>
<gene>
    <name evidence="1" type="primary">aroB</name>
    <name type="ordered locus">Gura_1820</name>
</gene>
<feature type="chain" id="PRO_1000117491" description="3-dehydroquinate synthase">
    <location>
        <begin position="1"/>
        <end position="360"/>
    </location>
</feature>
<feature type="binding site" evidence="1">
    <location>
        <begin position="72"/>
        <end position="77"/>
    </location>
    <ligand>
        <name>NAD(+)</name>
        <dbReference type="ChEBI" id="CHEBI:57540"/>
    </ligand>
</feature>
<feature type="binding site" evidence="1">
    <location>
        <begin position="106"/>
        <end position="110"/>
    </location>
    <ligand>
        <name>NAD(+)</name>
        <dbReference type="ChEBI" id="CHEBI:57540"/>
    </ligand>
</feature>
<feature type="binding site" evidence="1">
    <location>
        <begin position="130"/>
        <end position="131"/>
    </location>
    <ligand>
        <name>NAD(+)</name>
        <dbReference type="ChEBI" id="CHEBI:57540"/>
    </ligand>
</feature>
<feature type="binding site" evidence="1">
    <location>
        <position position="143"/>
    </location>
    <ligand>
        <name>NAD(+)</name>
        <dbReference type="ChEBI" id="CHEBI:57540"/>
    </ligand>
</feature>
<feature type="binding site" evidence="1">
    <location>
        <position position="152"/>
    </location>
    <ligand>
        <name>NAD(+)</name>
        <dbReference type="ChEBI" id="CHEBI:57540"/>
    </ligand>
</feature>
<feature type="binding site" evidence="1">
    <location>
        <position position="185"/>
    </location>
    <ligand>
        <name>Zn(2+)</name>
        <dbReference type="ChEBI" id="CHEBI:29105"/>
    </ligand>
</feature>
<feature type="binding site" evidence="1">
    <location>
        <position position="248"/>
    </location>
    <ligand>
        <name>Zn(2+)</name>
        <dbReference type="ChEBI" id="CHEBI:29105"/>
    </ligand>
</feature>
<feature type="binding site" evidence="1">
    <location>
        <position position="265"/>
    </location>
    <ligand>
        <name>Zn(2+)</name>
        <dbReference type="ChEBI" id="CHEBI:29105"/>
    </ligand>
</feature>
<evidence type="ECO:0000255" key="1">
    <source>
        <dbReference type="HAMAP-Rule" id="MF_00110"/>
    </source>
</evidence>
<accession>A5GF05</accession>
<comment type="function">
    <text evidence="1">Catalyzes the conversion of 3-deoxy-D-arabino-heptulosonate 7-phosphate (DAHP) to dehydroquinate (DHQ).</text>
</comment>
<comment type="catalytic activity">
    <reaction evidence="1">
        <text>7-phospho-2-dehydro-3-deoxy-D-arabino-heptonate = 3-dehydroquinate + phosphate</text>
        <dbReference type="Rhea" id="RHEA:21968"/>
        <dbReference type="ChEBI" id="CHEBI:32364"/>
        <dbReference type="ChEBI" id="CHEBI:43474"/>
        <dbReference type="ChEBI" id="CHEBI:58394"/>
        <dbReference type="EC" id="4.2.3.4"/>
    </reaction>
</comment>
<comment type="cofactor">
    <cofactor evidence="1">
        <name>Co(2+)</name>
        <dbReference type="ChEBI" id="CHEBI:48828"/>
    </cofactor>
    <cofactor evidence="1">
        <name>Zn(2+)</name>
        <dbReference type="ChEBI" id="CHEBI:29105"/>
    </cofactor>
    <text evidence="1">Binds 1 divalent metal cation per subunit. Can use either Co(2+) or Zn(2+).</text>
</comment>
<comment type="cofactor">
    <cofactor evidence="1">
        <name>NAD(+)</name>
        <dbReference type="ChEBI" id="CHEBI:57540"/>
    </cofactor>
</comment>
<comment type="pathway">
    <text evidence="1">Metabolic intermediate biosynthesis; chorismate biosynthesis; chorismate from D-erythrose 4-phosphate and phosphoenolpyruvate: step 2/7.</text>
</comment>
<comment type="subcellular location">
    <subcellularLocation>
        <location evidence="1">Cytoplasm</location>
    </subcellularLocation>
</comment>
<comment type="similarity">
    <text evidence="1">Belongs to the sugar phosphate cyclases superfamily. Dehydroquinate synthase family.</text>
</comment>
<proteinExistence type="inferred from homology"/>
<name>AROB_GEOUR</name>
<protein>
    <recommendedName>
        <fullName evidence="1">3-dehydroquinate synthase</fullName>
        <shortName evidence="1">DHQS</shortName>
        <ecNumber evidence="1">4.2.3.4</ecNumber>
    </recommendedName>
</protein>
<organism>
    <name type="scientific">Geotalea uraniireducens (strain Rf4)</name>
    <name type="common">Geobacter uraniireducens</name>
    <dbReference type="NCBI Taxonomy" id="351605"/>
    <lineage>
        <taxon>Bacteria</taxon>
        <taxon>Pseudomonadati</taxon>
        <taxon>Thermodesulfobacteriota</taxon>
        <taxon>Desulfuromonadia</taxon>
        <taxon>Geobacterales</taxon>
        <taxon>Geobacteraceae</taxon>
        <taxon>Geotalea</taxon>
    </lineage>
</organism>
<keyword id="KW-0028">Amino-acid biosynthesis</keyword>
<keyword id="KW-0057">Aromatic amino acid biosynthesis</keyword>
<keyword id="KW-0170">Cobalt</keyword>
<keyword id="KW-0963">Cytoplasm</keyword>
<keyword id="KW-0456">Lyase</keyword>
<keyword id="KW-0479">Metal-binding</keyword>
<keyword id="KW-0520">NAD</keyword>
<keyword id="KW-0547">Nucleotide-binding</keyword>
<keyword id="KW-1185">Reference proteome</keyword>
<keyword id="KW-0862">Zinc</keyword>